<dbReference type="EMBL" id="CP000259">
    <property type="protein sequence ID" value="ABF32997.1"/>
    <property type="molecule type" value="Genomic_DNA"/>
</dbReference>
<dbReference type="RefSeq" id="WP_002982186.1">
    <property type="nucleotide sequence ID" value="NC_008021.1"/>
</dbReference>
<dbReference type="SMR" id="Q1JJH6"/>
<dbReference type="KEGG" id="spk:MGAS9429_Spy1810"/>
<dbReference type="HOGENOM" id="CLU_040469_3_2_9"/>
<dbReference type="Proteomes" id="UP000002433">
    <property type="component" value="Chromosome"/>
</dbReference>
<dbReference type="GO" id="GO:0005829">
    <property type="term" value="C:cytosol"/>
    <property type="evidence" value="ECO:0007669"/>
    <property type="project" value="TreeGrafter"/>
</dbReference>
<dbReference type="GO" id="GO:0005524">
    <property type="term" value="F:ATP binding"/>
    <property type="evidence" value="ECO:0007669"/>
    <property type="project" value="UniProtKB-UniRule"/>
</dbReference>
<dbReference type="GO" id="GO:0016887">
    <property type="term" value="F:ATP hydrolysis activity"/>
    <property type="evidence" value="ECO:0007669"/>
    <property type="project" value="InterPro"/>
</dbReference>
<dbReference type="GO" id="GO:0140664">
    <property type="term" value="F:ATP-dependent DNA damage sensor activity"/>
    <property type="evidence" value="ECO:0007669"/>
    <property type="project" value="InterPro"/>
</dbReference>
<dbReference type="GO" id="GO:0003684">
    <property type="term" value="F:damaged DNA binding"/>
    <property type="evidence" value="ECO:0007669"/>
    <property type="project" value="UniProtKB-UniRule"/>
</dbReference>
<dbReference type="GO" id="GO:0003697">
    <property type="term" value="F:single-stranded DNA binding"/>
    <property type="evidence" value="ECO:0007669"/>
    <property type="project" value="UniProtKB-UniRule"/>
</dbReference>
<dbReference type="GO" id="GO:0006310">
    <property type="term" value="P:DNA recombination"/>
    <property type="evidence" value="ECO:0007669"/>
    <property type="project" value="UniProtKB-UniRule"/>
</dbReference>
<dbReference type="GO" id="GO:0006281">
    <property type="term" value="P:DNA repair"/>
    <property type="evidence" value="ECO:0007669"/>
    <property type="project" value="UniProtKB-UniRule"/>
</dbReference>
<dbReference type="GO" id="GO:0009432">
    <property type="term" value="P:SOS response"/>
    <property type="evidence" value="ECO:0007669"/>
    <property type="project" value="UniProtKB-UniRule"/>
</dbReference>
<dbReference type="CDD" id="cd00983">
    <property type="entry name" value="RecA"/>
    <property type="match status" value="1"/>
</dbReference>
<dbReference type="FunFam" id="3.40.50.300:FF:000087">
    <property type="entry name" value="Recombinase RecA"/>
    <property type="match status" value="1"/>
</dbReference>
<dbReference type="Gene3D" id="3.40.50.300">
    <property type="entry name" value="P-loop containing nucleotide triphosphate hydrolases"/>
    <property type="match status" value="1"/>
</dbReference>
<dbReference type="HAMAP" id="MF_00268">
    <property type="entry name" value="RecA"/>
    <property type="match status" value="1"/>
</dbReference>
<dbReference type="InterPro" id="IPR003593">
    <property type="entry name" value="AAA+_ATPase"/>
</dbReference>
<dbReference type="InterPro" id="IPR013765">
    <property type="entry name" value="DNA_recomb/repair_RecA"/>
</dbReference>
<dbReference type="InterPro" id="IPR020584">
    <property type="entry name" value="DNA_recomb/repair_RecA_CS"/>
</dbReference>
<dbReference type="InterPro" id="IPR027417">
    <property type="entry name" value="P-loop_NTPase"/>
</dbReference>
<dbReference type="InterPro" id="IPR049261">
    <property type="entry name" value="RecA-like_C"/>
</dbReference>
<dbReference type="InterPro" id="IPR049428">
    <property type="entry name" value="RecA-like_N"/>
</dbReference>
<dbReference type="InterPro" id="IPR020588">
    <property type="entry name" value="RecA_ATP-bd"/>
</dbReference>
<dbReference type="InterPro" id="IPR023400">
    <property type="entry name" value="RecA_C_sf"/>
</dbReference>
<dbReference type="InterPro" id="IPR020587">
    <property type="entry name" value="RecA_monomer-monomer_interface"/>
</dbReference>
<dbReference type="NCBIfam" id="TIGR02012">
    <property type="entry name" value="tigrfam_recA"/>
    <property type="match status" value="1"/>
</dbReference>
<dbReference type="PANTHER" id="PTHR45900:SF1">
    <property type="entry name" value="MITOCHONDRIAL DNA REPAIR PROTEIN RECA HOMOLOG-RELATED"/>
    <property type="match status" value="1"/>
</dbReference>
<dbReference type="PANTHER" id="PTHR45900">
    <property type="entry name" value="RECA"/>
    <property type="match status" value="1"/>
</dbReference>
<dbReference type="Pfam" id="PF00154">
    <property type="entry name" value="RecA"/>
    <property type="match status" value="1"/>
</dbReference>
<dbReference type="Pfam" id="PF21096">
    <property type="entry name" value="RecA_C"/>
    <property type="match status" value="1"/>
</dbReference>
<dbReference type="PRINTS" id="PR00142">
    <property type="entry name" value="RECA"/>
</dbReference>
<dbReference type="SMART" id="SM00382">
    <property type="entry name" value="AAA"/>
    <property type="match status" value="1"/>
</dbReference>
<dbReference type="SUPFAM" id="SSF52540">
    <property type="entry name" value="P-loop containing nucleoside triphosphate hydrolases"/>
    <property type="match status" value="1"/>
</dbReference>
<dbReference type="SUPFAM" id="SSF54752">
    <property type="entry name" value="RecA protein, C-terminal domain"/>
    <property type="match status" value="1"/>
</dbReference>
<dbReference type="PROSITE" id="PS00321">
    <property type="entry name" value="RECA_1"/>
    <property type="match status" value="1"/>
</dbReference>
<dbReference type="PROSITE" id="PS50162">
    <property type="entry name" value="RECA_2"/>
    <property type="match status" value="1"/>
</dbReference>
<dbReference type="PROSITE" id="PS50163">
    <property type="entry name" value="RECA_3"/>
    <property type="match status" value="1"/>
</dbReference>
<sequence length="378" mass="40646">MAKKLKKNEEITKKFGDERRKALDDALKNIEKDFGKGAVMRLGERAEQKVQVMSSGSLALDIALGAGGYPKGRIIEIYGPESSGKTTVALHAVAQAQKEGGIAAFIDAEHALDPAYAAALGVNIDELLLSQPDSGEQGLEIAGKLIDSGAVDLVVVDSVAALVPRAEIDGDIGDSHVGLQARMMSQAMRKLSASINKTKTIAIFINQLREKVGVMFGNPETTPGGRALKFYASVRLDVRGTTQIKGTGDQKDSSIGKETKIKVVKNKVAPPFKVAEVEIMYGEGISRTGELVKIASDLDIIQKAGAWFSYNGEKIGQGSENAKRYLAEHPELFDEIDRKVRVKFGLLEESEEESAMAVASEETDDLALDLDNGIEIED</sequence>
<protein>
    <recommendedName>
        <fullName evidence="1">Protein RecA</fullName>
    </recommendedName>
    <alternativeName>
        <fullName evidence="1">Recombinase A</fullName>
    </alternativeName>
</protein>
<reference key="1">
    <citation type="journal article" date="2006" name="Proc. Natl. Acad. Sci. U.S.A.">
        <title>Molecular genetic anatomy of inter- and intraserotype variation in the human bacterial pathogen group A Streptococcus.</title>
        <authorList>
            <person name="Beres S.B."/>
            <person name="Richter E.W."/>
            <person name="Nagiec M.J."/>
            <person name="Sumby P."/>
            <person name="Porcella S.F."/>
            <person name="DeLeo F.R."/>
            <person name="Musser J.M."/>
        </authorList>
    </citation>
    <scope>NUCLEOTIDE SEQUENCE [LARGE SCALE GENOMIC DNA]</scope>
    <source>
        <strain>MGAS9429</strain>
    </source>
</reference>
<organism>
    <name type="scientific">Streptococcus pyogenes serotype M12 (strain MGAS9429)</name>
    <dbReference type="NCBI Taxonomy" id="370551"/>
    <lineage>
        <taxon>Bacteria</taxon>
        <taxon>Bacillati</taxon>
        <taxon>Bacillota</taxon>
        <taxon>Bacilli</taxon>
        <taxon>Lactobacillales</taxon>
        <taxon>Streptococcaceae</taxon>
        <taxon>Streptococcus</taxon>
    </lineage>
</organism>
<name>RECA_STRPC</name>
<evidence type="ECO:0000255" key="1">
    <source>
        <dbReference type="HAMAP-Rule" id="MF_00268"/>
    </source>
</evidence>
<keyword id="KW-0067">ATP-binding</keyword>
<keyword id="KW-0963">Cytoplasm</keyword>
<keyword id="KW-0227">DNA damage</keyword>
<keyword id="KW-0233">DNA recombination</keyword>
<keyword id="KW-0234">DNA repair</keyword>
<keyword id="KW-0238">DNA-binding</keyword>
<keyword id="KW-0547">Nucleotide-binding</keyword>
<keyword id="KW-0742">SOS response</keyword>
<feature type="chain" id="PRO_1000048012" description="Protein RecA">
    <location>
        <begin position="1"/>
        <end position="378"/>
    </location>
</feature>
<feature type="binding site" evidence="1">
    <location>
        <begin position="79"/>
        <end position="86"/>
    </location>
    <ligand>
        <name>ATP</name>
        <dbReference type="ChEBI" id="CHEBI:30616"/>
    </ligand>
</feature>
<accession>Q1JJH6</accession>
<proteinExistence type="inferred from homology"/>
<comment type="function">
    <text evidence="1">Can catalyze the hydrolysis of ATP in the presence of single-stranded DNA, the ATP-dependent uptake of single-stranded DNA by duplex DNA, and the ATP-dependent hybridization of homologous single-stranded DNAs. It interacts with LexA causing its activation and leading to its autocatalytic cleavage.</text>
</comment>
<comment type="subcellular location">
    <subcellularLocation>
        <location evidence="1">Cytoplasm</location>
    </subcellularLocation>
</comment>
<comment type="similarity">
    <text evidence="1">Belongs to the RecA family.</text>
</comment>
<gene>
    <name evidence="1" type="primary">recA</name>
    <name type="ordered locus">MGAS9429_Spy1810</name>
</gene>